<accession>Q16U25</accession>
<keyword id="KW-1185">Reference proteome</keyword>
<comment type="similarity">
    <text evidence="2">Belongs to the FAM50 family.</text>
</comment>
<name>FAM50_AEDAE</name>
<gene>
    <name type="ORF">AAEL010045</name>
</gene>
<proteinExistence type="inferred from homology"/>
<evidence type="ECO:0000256" key="1">
    <source>
        <dbReference type="SAM" id="MobiDB-lite"/>
    </source>
</evidence>
<evidence type="ECO:0000305" key="2"/>
<reference key="1">
    <citation type="journal article" date="2007" name="Science">
        <title>Genome sequence of Aedes aegypti, a major arbovirus vector.</title>
        <authorList>
            <person name="Nene V."/>
            <person name="Wortman J.R."/>
            <person name="Lawson D."/>
            <person name="Haas B.J."/>
            <person name="Kodira C.D."/>
            <person name="Tu Z.J."/>
            <person name="Loftus B.J."/>
            <person name="Xi Z."/>
            <person name="Megy K."/>
            <person name="Grabherr M."/>
            <person name="Ren Q."/>
            <person name="Zdobnov E.M."/>
            <person name="Lobo N.F."/>
            <person name="Campbell K.S."/>
            <person name="Brown S.E."/>
            <person name="Bonaldo M.F."/>
            <person name="Zhu J."/>
            <person name="Sinkins S.P."/>
            <person name="Hogenkamp D.G."/>
            <person name="Amedeo P."/>
            <person name="Arensburger P."/>
            <person name="Atkinson P.W."/>
            <person name="Bidwell S.L."/>
            <person name="Biedler J."/>
            <person name="Birney E."/>
            <person name="Bruggner R.V."/>
            <person name="Costas J."/>
            <person name="Coy M.R."/>
            <person name="Crabtree J."/>
            <person name="Crawford M."/>
            <person name="DeBruyn B."/>
            <person name="DeCaprio D."/>
            <person name="Eiglmeier K."/>
            <person name="Eisenstadt E."/>
            <person name="El-Dorry H."/>
            <person name="Gelbart W.M."/>
            <person name="Gomes S.L."/>
            <person name="Hammond M."/>
            <person name="Hannick L.I."/>
            <person name="Hogan J.R."/>
            <person name="Holmes M.H."/>
            <person name="Jaffe D."/>
            <person name="Johnston S.J."/>
            <person name="Kennedy R.C."/>
            <person name="Koo H."/>
            <person name="Kravitz S."/>
            <person name="Kriventseva E.V."/>
            <person name="Kulp D."/>
            <person name="Labutti K."/>
            <person name="Lee E."/>
            <person name="Li S."/>
            <person name="Lovin D.D."/>
            <person name="Mao C."/>
            <person name="Mauceli E."/>
            <person name="Menck C.F."/>
            <person name="Miller J.R."/>
            <person name="Montgomery P."/>
            <person name="Mori A."/>
            <person name="Nascimento A.L."/>
            <person name="Naveira H.F."/>
            <person name="Nusbaum C."/>
            <person name="O'Leary S.B."/>
            <person name="Orvis J."/>
            <person name="Pertea M."/>
            <person name="Quesneville H."/>
            <person name="Reidenbach K.R."/>
            <person name="Rogers Y.-H.C."/>
            <person name="Roth C.W."/>
            <person name="Schneider J.R."/>
            <person name="Schatz M."/>
            <person name="Shumway M."/>
            <person name="Stanke M."/>
            <person name="Stinson E.O."/>
            <person name="Tubio J.M.C."/>
            <person name="Vanzee J.P."/>
            <person name="Verjovski-Almeida S."/>
            <person name="Werner D."/>
            <person name="White O.R."/>
            <person name="Wyder S."/>
            <person name="Zeng Q."/>
            <person name="Zhao Q."/>
            <person name="Zhao Y."/>
            <person name="Hill C.A."/>
            <person name="Raikhel A.S."/>
            <person name="Soares M.B."/>
            <person name="Knudson D.L."/>
            <person name="Lee N.H."/>
            <person name="Galagan J."/>
            <person name="Salzberg S.L."/>
            <person name="Paulsen I.T."/>
            <person name="Dimopoulos G."/>
            <person name="Collins F.H."/>
            <person name="Bruce B."/>
            <person name="Fraser-Liggett C.M."/>
            <person name="Severson D.W."/>
        </authorList>
    </citation>
    <scope>NUCLEOTIDE SEQUENCE [LARGE SCALE GENOMIC DNA]</scope>
    <source>
        <strain>LVPib12</strain>
    </source>
</reference>
<feature type="chain" id="PRO_0000326516" description="Protein FAM50 homolog">
    <location>
        <begin position="1"/>
        <end position="347"/>
    </location>
</feature>
<feature type="region of interest" description="Disordered" evidence="1">
    <location>
        <begin position="77"/>
        <end position="142"/>
    </location>
</feature>
<feature type="compositionally biased region" description="Basic and acidic residues" evidence="1">
    <location>
        <begin position="77"/>
        <end position="113"/>
    </location>
</feature>
<feature type="compositionally biased region" description="Acidic residues" evidence="1">
    <location>
        <begin position="123"/>
        <end position="138"/>
    </location>
</feature>
<dbReference type="EMBL" id="CH477634">
    <property type="protein sequence ID" value="EAT38016.1"/>
    <property type="molecule type" value="Genomic_DNA"/>
</dbReference>
<dbReference type="SMR" id="Q16U25"/>
<dbReference type="FunCoup" id="Q16U25">
    <property type="interactions" value="812"/>
</dbReference>
<dbReference type="STRING" id="7159.Q16U25"/>
<dbReference type="PaxDb" id="7159-AAEL010045-PA"/>
<dbReference type="EnsemblMetazoa" id="AAEL010045-RA">
    <property type="protein sequence ID" value="AAEL010045-PA"/>
    <property type="gene ID" value="AAEL010045"/>
</dbReference>
<dbReference type="EnsemblMetazoa" id="AAEL023468-RA">
    <property type="protein sequence ID" value="AAEL023468-PA"/>
    <property type="gene ID" value="AAEL023468"/>
</dbReference>
<dbReference type="GeneID" id="5572774"/>
<dbReference type="KEGG" id="aag:5572774"/>
<dbReference type="VEuPathDB" id="VectorBase:AAEL010045"/>
<dbReference type="VEuPathDB" id="VectorBase:AAEL023468"/>
<dbReference type="eggNOG" id="KOG2894">
    <property type="taxonomic scope" value="Eukaryota"/>
</dbReference>
<dbReference type="HOGENOM" id="CLU_037985_1_1_1"/>
<dbReference type="InParanoid" id="Q16U25"/>
<dbReference type="OMA" id="DFIWVFL"/>
<dbReference type="OrthoDB" id="1562195at2759"/>
<dbReference type="PhylomeDB" id="Q16U25"/>
<dbReference type="Proteomes" id="UP000008820">
    <property type="component" value="Chromosome 1"/>
</dbReference>
<dbReference type="Proteomes" id="UP000008820">
    <property type="component" value="Unassembled WGS sequence"/>
</dbReference>
<dbReference type="Proteomes" id="UP000682892">
    <property type="component" value="Unassembled WGS sequence"/>
</dbReference>
<dbReference type="GO" id="GO:0005634">
    <property type="term" value="C:nucleus"/>
    <property type="evidence" value="ECO:0007669"/>
    <property type="project" value="InterPro"/>
</dbReference>
<dbReference type="GO" id="GO:0006325">
    <property type="term" value="P:chromatin organization"/>
    <property type="evidence" value="ECO:0007669"/>
    <property type="project" value="TreeGrafter"/>
</dbReference>
<dbReference type="InterPro" id="IPR048337">
    <property type="entry name" value="FAM50A/XAP5_C"/>
</dbReference>
<dbReference type="InterPro" id="IPR007005">
    <property type="entry name" value="XAP5"/>
</dbReference>
<dbReference type="PANTHER" id="PTHR12722:SF0">
    <property type="entry name" value="PROTEIN FAM50A"/>
    <property type="match status" value="1"/>
</dbReference>
<dbReference type="PANTHER" id="PTHR12722">
    <property type="entry name" value="XAP-5 PROTEIN-RELATED"/>
    <property type="match status" value="1"/>
</dbReference>
<dbReference type="Pfam" id="PF04921">
    <property type="entry name" value="XAP5"/>
    <property type="match status" value="1"/>
</dbReference>
<sequence>MAYYKGAASEGGRAMQLMKKREIAQQEIEFRKKKIEEDLKVSNIESKFATHYDAVEQQLKTSTIGLVTLDEMKQKQEDIVREREKKLAQKKEEKDREKLKALEAKQAEKDRQRKQIQALSFNPEEDEESFDDEDEEEPLEIKPHKWQTEECTEPRIKKIKKNPDVDTSFLPDREREEMDNKLREELRQEWAMKQATLKDQEIPITFSYWDGSGHRKCVTMKKGNSIYQFLQKCLEMLRKEFSELKTVMADQLMYVKEDLILPHHYTFYDFIVTKARGKSGPLFSFDVKDDIRMISDASVEKEETHAGKVLLRSWYERNKHIFPASRWEPYDPTKVYDKYTIKDKCKK</sequence>
<organism>
    <name type="scientific">Aedes aegypti</name>
    <name type="common">Yellowfever mosquito</name>
    <name type="synonym">Culex aegypti</name>
    <dbReference type="NCBI Taxonomy" id="7159"/>
    <lineage>
        <taxon>Eukaryota</taxon>
        <taxon>Metazoa</taxon>
        <taxon>Ecdysozoa</taxon>
        <taxon>Arthropoda</taxon>
        <taxon>Hexapoda</taxon>
        <taxon>Insecta</taxon>
        <taxon>Pterygota</taxon>
        <taxon>Neoptera</taxon>
        <taxon>Endopterygota</taxon>
        <taxon>Diptera</taxon>
        <taxon>Nematocera</taxon>
        <taxon>Culicoidea</taxon>
        <taxon>Culicidae</taxon>
        <taxon>Culicinae</taxon>
        <taxon>Aedini</taxon>
        <taxon>Aedes</taxon>
        <taxon>Stegomyia</taxon>
    </lineage>
</organism>
<protein>
    <recommendedName>
        <fullName>Protein FAM50 homolog</fullName>
    </recommendedName>
</protein>